<gene>
    <name evidence="1" type="primary">xni</name>
    <name evidence="1" type="synonym">ygdG</name>
    <name type="ordered locus">Sbal223_2988</name>
</gene>
<reference key="1">
    <citation type="submission" date="2008-12" db="EMBL/GenBank/DDBJ databases">
        <title>Complete sequence of chromosome of Shewanella baltica OS223.</title>
        <authorList>
            <consortium name="US DOE Joint Genome Institute"/>
            <person name="Lucas S."/>
            <person name="Copeland A."/>
            <person name="Lapidus A."/>
            <person name="Glavina del Rio T."/>
            <person name="Dalin E."/>
            <person name="Tice H."/>
            <person name="Bruce D."/>
            <person name="Goodwin L."/>
            <person name="Pitluck S."/>
            <person name="Chertkov O."/>
            <person name="Meincke L."/>
            <person name="Brettin T."/>
            <person name="Detter J.C."/>
            <person name="Han C."/>
            <person name="Kuske C.R."/>
            <person name="Larimer F."/>
            <person name="Land M."/>
            <person name="Hauser L."/>
            <person name="Kyrpides N."/>
            <person name="Ovchinnikova G."/>
            <person name="Brettar I."/>
            <person name="Rodrigues J."/>
            <person name="Konstantinidis K."/>
            <person name="Tiedje J."/>
        </authorList>
    </citation>
    <scope>NUCLEOTIDE SEQUENCE [LARGE SCALE GENOMIC DNA]</scope>
    <source>
        <strain>OS223</strain>
    </source>
</reference>
<dbReference type="EC" id="3.1.-.-" evidence="1"/>
<dbReference type="EMBL" id="CP001252">
    <property type="protein sequence ID" value="ACK47474.1"/>
    <property type="molecule type" value="Genomic_DNA"/>
</dbReference>
<dbReference type="RefSeq" id="WP_012588189.1">
    <property type="nucleotide sequence ID" value="NC_011663.1"/>
</dbReference>
<dbReference type="SMR" id="B8EAT2"/>
<dbReference type="KEGG" id="sbp:Sbal223_2988"/>
<dbReference type="HOGENOM" id="CLU_004675_1_2_6"/>
<dbReference type="Proteomes" id="UP000002507">
    <property type="component" value="Chromosome"/>
</dbReference>
<dbReference type="GO" id="GO:0008409">
    <property type="term" value="F:5'-3' exonuclease activity"/>
    <property type="evidence" value="ECO:0007669"/>
    <property type="project" value="InterPro"/>
</dbReference>
<dbReference type="GO" id="GO:0017108">
    <property type="term" value="F:5'-flap endonuclease activity"/>
    <property type="evidence" value="ECO:0007669"/>
    <property type="project" value="UniProtKB-UniRule"/>
</dbReference>
<dbReference type="GO" id="GO:0003677">
    <property type="term" value="F:DNA binding"/>
    <property type="evidence" value="ECO:0007669"/>
    <property type="project" value="UniProtKB-UniRule"/>
</dbReference>
<dbReference type="GO" id="GO:0000287">
    <property type="term" value="F:magnesium ion binding"/>
    <property type="evidence" value="ECO:0007669"/>
    <property type="project" value="UniProtKB-UniRule"/>
</dbReference>
<dbReference type="GO" id="GO:0030955">
    <property type="term" value="F:potassium ion binding"/>
    <property type="evidence" value="ECO:0007669"/>
    <property type="project" value="UniProtKB-UniRule"/>
</dbReference>
<dbReference type="GO" id="GO:0033567">
    <property type="term" value="P:DNA replication, Okazaki fragment processing"/>
    <property type="evidence" value="ECO:0007669"/>
    <property type="project" value="UniProtKB-UniRule"/>
</dbReference>
<dbReference type="CDD" id="cd09898">
    <property type="entry name" value="H3TH_53EXO"/>
    <property type="match status" value="1"/>
</dbReference>
<dbReference type="CDD" id="cd09859">
    <property type="entry name" value="PIN_53EXO"/>
    <property type="match status" value="1"/>
</dbReference>
<dbReference type="FunFam" id="1.10.150.20:FF:000003">
    <property type="entry name" value="DNA polymerase I"/>
    <property type="match status" value="1"/>
</dbReference>
<dbReference type="Gene3D" id="1.10.150.20">
    <property type="entry name" value="5' to 3' exonuclease, C-terminal subdomain"/>
    <property type="match status" value="1"/>
</dbReference>
<dbReference type="Gene3D" id="3.40.50.1010">
    <property type="entry name" value="5'-nuclease"/>
    <property type="match status" value="1"/>
</dbReference>
<dbReference type="HAMAP" id="MF_01192">
    <property type="entry name" value="Xni"/>
    <property type="match status" value="1"/>
</dbReference>
<dbReference type="InterPro" id="IPR020046">
    <property type="entry name" value="5-3_exonucl_a-hlix_arch_N"/>
</dbReference>
<dbReference type="InterPro" id="IPR002421">
    <property type="entry name" value="5-3_exonuclease"/>
</dbReference>
<dbReference type="InterPro" id="IPR036279">
    <property type="entry name" value="5-3_exonuclease_C_sf"/>
</dbReference>
<dbReference type="InterPro" id="IPR020045">
    <property type="entry name" value="DNA_polI_H3TH"/>
</dbReference>
<dbReference type="InterPro" id="IPR038969">
    <property type="entry name" value="FEN"/>
</dbReference>
<dbReference type="InterPro" id="IPR008918">
    <property type="entry name" value="HhH2"/>
</dbReference>
<dbReference type="InterPro" id="IPR029060">
    <property type="entry name" value="PIN-like_dom_sf"/>
</dbReference>
<dbReference type="InterPro" id="IPR022895">
    <property type="entry name" value="Xni"/>
</dbReference>
<dbReference type="NCBIfam" id="NF007017">
    <property type="entry name" value="PRK09482.1"/>
    <property type="match status" value="1"/>
</dbReference>
<dbReference type="PANTHER" id="PTHR42646:SF2">
    <property type="entry name" value="5'-3' EXONUCLEASE FAMILY PROTEIN"/>
    <property type="match status" value="1"/>
</dbReference>
<dbReference type="PANTHER" id="PTHR42646">
    <property type="entry name" value="FLAP ENDONUCLEASE XNI"/>
    <property type="match status" value="1"/>
</dbReference>
<dbReference type="Pfam" id="PF01367">
    <property type="entry name" value="5_3_exonuc"/>
    <property type="match status" value="1"/>
</dbReference>
<dbReference type="Pfam" id="PF02739">
    <property type="entry name" value="5_3_exonuc_N"/>
    <property type="match status" value="1"/>
</dbReference>
<dbReference type="SMART" id="SM00475">
    <property type="entry name" value="53EXOc"/>
    <property type="match status" value="1"/>
</dbReference>
<dbReference type="SMART" id="SM00279">
    <property type="entry name" value="HhH2"/>
    <property type="match status" value="1"/>
</dbReference>
<dbReference type="SUPFAM" id="SSF47807">
    <property type="entry name" value="5' to 3' exonuclease, C-terminal subdomain"/>
    <property type="match status" value="1"/>
</dbReference>
<dbReference type="SUPFAM" id="SSF88723">
    <property type="entry name" value="PIN domain-like"/>
    <property type="match status" value="1"/>
</dbReference>
<feature type="chain" id="PRO_1000164504" description="Flap endonuclease Xni">
    <location>
        <begin position="1"/>
        <end position="262"/>
    </location>
</feature>
<feature type="domain" description="5'-3' exonuclease" evidence="1">
    <location>
        <begin position="162"/>
        <end position="257"/>
    </location>
</feature>
<feature type="region of interest" description="Interaction with DNA" evidence="1">
    <location>
        <begin position="185"/>
        <end position="190"/>
    </location>
</feature>
<feature type="binding site" evidence="1">
    <location>
        <position position="105"/>
    </location>
    <ligand>
        <name>Mg(2+)</name>
        <dbReference type="ChEBI" id="CHEBI:18420"/>
    </ligand>
</feature>
<feature type="binding site" evidence="1">
    <location>
        <position position="172"/>
    </location>
    <ligand>
        <name>K(+)</name>
        <dbReference type="ChEBI" id="CHEBI:29103"/>
    </ligand>
</feature>
<feature type="binding site" evidence="1">
    <location>
        <position position="173"/>
    </location>
    <ligand>
        <name>K(+)</name>
        <dbReference type="ChEBI" id="CHEBI:29103"/>
    </ligand>
</feature>
<feature type="binding site" evidence="1">
    <location>
        <position position="181"/>
    </location>
    <ligand>
        <name>K(+)</name>
        <dbReference type="ChEBI" id="CHEBI:29103"/>
    </ligand>
</feature>
<feature type="binding site" evidence="1">
    <location>
        <position position="183"/>
    </location>
    <ligand>
        <name>K(+)</name>
        <dbReference type="ChEBI" id="CHEBI:29103"/>
    </ligand>
</feature>
<feature type="binding site" evidence="1">
    <location>
        <position position="186"/>
    </location>
    <ligand>
        <name>K(+)</name>
        <dbReference type="ChEBI" id="CHEBI:29103"/>
    </ligand>
</feature>
<evidence type="ECO:0000255" key="1">
    <source>
        <dbReference type="HAMAP-Rule" id="MF_01192"/>
    </source>
</evidence>
<sequence>MNKFLIIDGLNLVRRIYAAIPDETDMQSLTERVSSACTKLLRVHRPTHVAIVWDGDEISWRKQLYPNYKKGRKPMPEPLAQGLVALQDHLTAMHIGSIYAAAEADDVIATLAIKTAKAQGEAIIVSTDKGFSQLNHRQISQWDHFNQQYLDIAALEQKLGVERSQFLDLMALAGDSGNKIPGIAGIGPKSAAELLKTFRSLPTLFSSLSNLGAKQAKKLAEGKEMARLSYKLAQLQTDLPLNINLKDFRVIDSPPEKTINQD</sequence>
<accession>B8EAT2</accession>
<proteinExistence type="inferred from homology"/>
<keyword id="KW-0238">DNA-binding</keyword>
<keyword id="KW-0255">Endonuclease</keyword>
<keyword id="KW-0378">Hydrolase</keyword>
<keyword id="KW-0460">Magnesium</keyword>
<keyword id="KW-0479">Metal-binding</keyword>
<keyword id="KW-0540">Nuclease</keyword>
<keyword id="KW-0630">Potassium</keyword>
<comment type="function">
    <text evidence="1">Has flap endonuclease activity. During DNA replication, flap endonucleases cleave the 5'-overhanging flap structure that is generated by displacement synthesis when DNA polymerase encounters the 5'-end of a downstream Okazaki fragment.</text>
</comment>
<comment type="cofactor">
    <cofactor evidence="1">
        <name>Mg(2+)</name>
        <dbReference type="ChEBI" id="CHEBI:18420"/>
    </cofactor>
    <text evidence="1">Binds 2 Mg(2+) per subunit. Only one magnesium ion has a direct interaction with the protein, the other interactions are indirect.</text>
</comment>
<comment type="cofactor">
    <cofactor evidence="1">
        <name>K(+)</name>
        <dbReference type="ChEBI" id="CHEBI:29103"/>
    </cofactor>
    <text evidence="1">Binds 1 K(+) per subunit. The potassium ion strongly increases the affinity for DNA.</text>
</comment>
<comment type="similarity">
    <text evidence="1">Belongs to the Xni family.</text>
</comment>
<name>XNI_SHEB2</name>
<protein>
    <recommendedName>
        <fullName evidence="1">Flap endonuclease Xni</fullName>
        <shortName evidence="1">FEN</shortName>
        <ecNumber evidence="1">3.1.-.-</ecNumber>
    </recommendedName>
</protein>
<organism>
    <name type="scientific">Shewanella baltica (strain OS223)</name>
    <dbReference type="NCBI Taxonomy" id="407976"/>
    <lineage>
        <taxon>Bacteria</taxon>
        <taxon>Pseudomonadati</taxon>
        <taxon>Pseudomonadota</taxon>
        <taxon>Gammaproteobacteria</taxon>
        <taxon>Alteromonadales</taxon>
        <taxon>Shewanellaceae</taxon>
        <taxon>Shewanella</taxon>
    </lineage>
</organism>